<feature type="chain" id="PRO_0000141799" description="3-isopropylmalate dehydratase small subunit">
    <location>
        <begin position="1"/>
        <end position="208"/>
    </location>
</feature>
<accession>O85073</accession>
<gene>
    <name type="primary">leuD</name>
</gene>
<name>LEUD_BUCDN</name>
<reference key="1">
    <citation type="journal article" date="1999" name="J. Mol. Evol.">
        <title>Genetic characterization of plasmids containing genes encoding enzymes of leucine biosynthesis in endosymbionts (Buchnera) of aphids.</title>
        <authorList>
            <person name="Baumann L."/>
            <person name="Baumann P."/>
            <person name="Moran N.A."/>
            <person name="Sandstroem J.P."/>
            <person name="Thao M.L."/>
        </authorList>
    </citation>
    <scope>NUCLEOTIDE SEQUENCE [GENOMIC DNA]</scope>
</reference>
<keyword id="KW-0028">Amino-acid biosynthesis</keyword>
<keyword id="KW-0100">Branched-chain amino acid biosynthesis</keyword>
<keyword id="KW-0432">Leucine biosynthesis</keyword>
<keyword id="KW-0456">Lyase</keyword>
<keyword id="KW-0614">Plasmid</keyword>
<evidence type="ECO:0000250" key="1"/>
<evidence type="ECO:0000305" key="2"/>
<geneLocation type="plasmid">
    <name>pLeu-Dn</name>
    <name>pBDn1</name>
</geneLocation>
<organism>
    <name type="scientific">Buchnera aphidicola subsp. Diuraphis noxia</name>
    <dbReference type="NCBI Taxonomy" id="118101"/>
    <lineage>
        <taxon>Bacteria</taxon>
        <taxon>Pseudomonadati</taxon>
        <taxon>Pseudomonadota</taxon>
        <taxon>Gammaproteobacteria</taxon>
        <taxon>Enterobacterales</taxon>
        <taxon>Erwiniaceae</taxon>
        <taxon>Buchnera</taxon>
    </lineage>
</organism>
<comment type="function">
    <text evidence="1">Catalyzes the isomerization between 2-isopropylmalate and 3-isopropylmalate, via the formation of 2-isopropylmaleate.</text>
</comment>
<comment type="catalytic activity">
    <reaction>
        <text>(2R,3S)-3-isopropylmalate = (2S)-2-isopropylmalate</text>
        <dbReference type="Rhea" id="RHEA:32287"/>
        <dbReference type="ChEBI" id="CHEBI:1178"/>
        <dbReference type="ChEBI" id="CHEBI:35121"/>
        <dbReference type="EC" id="4.2.1.33"/>
    </reaction>
</comment>
<comment type="pathway">
    <text>Amino-acid biosynthesis; L-leucine biosynthesis; L-leucine from 3-methyl-2-oxobutanoate: step 2/4.</text>
</comment>
<comment type="subunit">
    <text evidence="1">Heterodimer of LeuC and LeuD.</text>
</comment>
<comment type="similarity">
    <text evidence="2">Belongs to the LeuD family. LeuD type 1 subfamily.</text>
</comment>
<proteinExistence type="inferred from homology"/>
<dbReference type="EC" id="4.2.1.33"/>
<dbReference type="EMBL" id="AF041837">
    <property type="protein sequence ID" value="AAD12603.1"/>
    <property type="molecule type" value="Genomic_DNA"/>
</dbReference>
<dbReference type="RefSeq" id="NP_047190.1">
    <property type="nucleotide sequence ID" value="NC_001911.1"/>
</dbReference>
<dbReference type="SMR" id="O85073"/>
<dbReference type="UniPathway" id="UPA00048">
    <property type="reaction ID" value="UER00071"/>
</dbReference>
<dbReference type="GO" id="GO:0009316">
    <property type="term" value="C:3-isopropylmalate dehydratase complex"/>
    <property type="evidence" value="ECO:0007669"/>
    <property type="project" value="InterPro"/>
</dbReference>
<dbReference type="GO" id="GO:0003861">
    <property type="term" value="F:3-isopropylmalate dehydratase activity"/>
    <property type="evidence" value="ECO:0007669"/>
    <property type="project" value="UniProtKB-UniRule"/>
</dbReference>
<dbReference type="GO" id="GO:0009098">
    <property type="term" value="P:L-leucine biosynthetic process"/>
    <property type="evidence" value="ECO:0007669"/>
    <property type="project" value="UniProtKB-UniRule"/>
</dbReference>
<dbReference type="CDD" id="cd01577">
    <property type="entry name" value="IPMI_Swivel"/>
    <property type="match status" value="1"/>
</dbReference>
<dbReference type="FunFam" id="3.20.19.10:FF:000003">
    <property type="entry name" value="3-isopropylmalate dehydratase small subunit"/>
    <property type="match status" value="1"/>
</dbReference>
<dbReference type="Gene3D" id="3.20.19.10">
    <property type="entry name" value="Aconitase, domain 4"/>
    <property type="match status" value="1"/>
</dbReference>
<dbReference type="HAMAP" id="MF_01031">
    <property type="entry name" value="LeuD_type1"/>
    <property type="match status" value="1"/>
</dbReference>
<dbReference type="InterPro" id="IPR004431">
    <property type="entry name" value="3-IsopropMal_deHydase_ssu"/>
</dbReference>
<dbReference type="InterPro" id="IPR015928">
    <property type="entry name" value="Aconitase/3IPM_dehydase_swvl"/>
</dbReference>
<dbReference type="InterPro" id="IPR000573">
    <property type="entry name" value="AconitaseA/IPMdHydase_ssu_swvl"/>
</dbReference>
<dbReference type="InterPro" id="IPR033940">
    <property type="entry name" value="IPMI_Swivel"/>
</dbReference>
<dbReference type="InterPro" id="IPR050075">
    <property type="entry name" value="LeuD"/>
</dbReference>
<dbReference type="NCBIfam" id="TIGR00171">
    <property type="entry name" value="leuD"/>
    <property type="match status" value="1"/>
</dbReference>
<dbReference type="NCBIfam" id="NF002458">
    <property type="entry name" value="PRK01641.1"/>
    <property type="match status" value="1"/>
</dbReference>
<dbReference type="PANTHER" id="PTHR43345:SF5">
    <property type="entry name" value="3-ISOPROPYLMALATE DEHYDRATASE SMALL SUBUNIT"/>
    <property type="match status" value="1"/>
</dbReference>
<dbReference type="PANTHER" id="PTHR43345">
    <property type="entry name" value="3-ISOPROPYLMALATE DEHYDRATASE SMALL SUBUNIT 2-RELATED-RELATED"/>
    <property type="match status" value="1"/>
</dbReference>
<dbReference type="Pfam" id="PF00694">
    <property type="entry name" value="Aconitase_C"/>
    <property type="match status" value="1"/>
</dbReference>
<dbReference type="SUPFAM" id="SSF52016">
    <property type="entry name" value="LeuD/IlvD-like"/>
    <property type="match status" value="1"/>
</dbReference>
<sequence length="208" mass="24266">MLKFIEHTGVVAPLDISNVDTDAIIPKQFLKGINKKGFGKFLFHDWRYLDSNQLKINNKFILNKKIYENASILLTKKNFGCGSSREHAVWSLLDYGFKVIVASSFSDIFYNNSFNNKLLLITLDEKKIDSIFDIVKKNLGINISINLLTNKVIINQKTFFFKLDEFRRVCFLNDIDHIDLTMNSLKKINVYENNIPFFLLNRKEFKSH</sequence>
<protein>
    <recommendedName>
        <fullName>3-isopropylmalate dehydratase small subunit</fullName>
        <ecNumber>4.2.1.33</ecNumber>
    </recommendedName>
    <alternativeName>
        <fullName>Alpha-IPM isomerase</fullName>
        <shortName>IPMI</shortName>
    </alternativeName>
    <alternativeName>
        <fullName>Isopropylmalate isomerase</fullName>
    </alternativeName>
</protein>